<reference key="1">
    <citation type="journal article" date="2007" name="J. Bacteriol.">
        <title>The genome sequence of avian pathogenic Escherichia coli strain O1:K1:H7 shares strong similarities with human extraintestinal pathogenic E. coli genomes.</title>
        <authorList>
            <person name="Johnson T.J."/>
            <person name="Kariyawasam S."/>
            <person name="Wannemuehler Y."/>
            <person name="Mangiamele P."/>
            <person name="Johnson S.J."/>
            <person name="Doetkott C."/>
            <person name="Skyberg J.A."/>
            <person name="Lynne A.M."/>
            <person name="Johnson J.R."/>
            <person name="Nolan L.K."/>
        </authorList>
    </citation>
    <scope>NUCLEOTIDE SEQUENCE [LARGE SCALE GENOMIC DNA]</scope>
</reference>
<name>SYH_ECOK1</name>
<keyword id="KW-0030">Aminoacyl-tRNA synthetase</keyword>
<keyword id="KW-0067">ATP-binding</keyword>
<keyword id="KW-0963">Cytoplasm</keyword>
<keyword id="KW-0436">Ligase</keyword>
<keyword id="KW-0547">Nucleotide-binding</keyword>
<keyword id="KW-0648">Protein biosynthesis</keyword>
<keyword id="KW-1185">Reference proteome</keyword>
<evidence type="ECO:0000255" key="1">
    <source>
        <dbReference type="HAMAP-Rule" id="MF_00127"/>
    </source>
</evidence>
<dbReference type="EC" id="6.1.1.21" evidence="1"/>
<dbReference type="EMBL" id="CP000468">
    <property type="protein sequence ID" value="ABJ01942.1"/>
    <property type="molecule type" value="Genomic_DNA"/>
</dbReference>
<dbReference type="RefSeq" id="WP_001107167.1">
    <property type="nucleotide sequence ID" value="NZ_CADILS010000012.1"/>
</dbReference>
<dbReference type="SMR" id="A1AE52"/>
<dbReference type="GeneID" id="75206207"/>
<dbReference type="KEGG" id="ecv:APECO1_4010"/>
<dbReference type="HOGENOM" id="CLU_025113_1_1_6"/>
<dbReference type="Proteomes" id="UP000008216">
    <property type="component" value="Chromosome"/>
</dbReference>
<dbReference type="GO" id="GO:0005737">
    <property type="term" value="C:cytoplasm"/>
    <property type="evidence" value="ECO:0007669"/>
    <property type="project" value="UniProtKB-SubCell"/>
</dbReference>
<dbReference type="GO" id="GO:0005524">
    <property type="term" value="F:ATP binding"/>
    <property type="evidence" value="ECO:0007669"/>
    <property type="project" value="UniProtKB-UniRule"/>
</dbReference>
<dbReference type="GO" id="GO:0004821">
    <property type="term" value="F:histidine-tRNA ligase activity"/>
    <property type="evidence" value="ECO:0007669"/>
    <property type="project" value="UniProtKB-UniRule"/>
</dbReference>
<dbReference type="GO" id="GO:0006427">
    <property type="term" value="P:histidyl-tRNA aminoacylation"/>
    <property type="evidence" value="ECO:0007669"/>
    <property type="project" value="UniProtKB-UniRule"/>
</dbReference>
<dbReference type="CDD" id="cd00773">
    <property type="entry name" value="HisRS-like_core"/>
    <property type="match status" value="1"/>
</dbReference>
<dbReference type="CDD" id="cd00859">
    <property type="entry name" value="HisRS_anticodon"/>
    <property type="match status" value="1"/>
</dbReference>
<dbReference type="FunFam" id="3.30.930.10:FF:000005">
    <property type="entry name" value="Histidine--tRNA ligase"/>
    <property type="match status" value="1"/>
</dbReference>
<dbReference type="FunFam" id="3.40.50.800:FF:000007">
    <property type="entry name" value="Histidine--tRNA ligase"/>
    <property type="match status" value="1"/>
</dbReference>
<dbReference type="Gene3D" id="3.40.50.800">
    <property type="entry name" value="Anticodon-binding domain"/>
    <property type="match status" value="1"/>
</dbReference>
<dbReference type="Gene3D" id="3.30.930.10">
    <property type="entry name" value="Bira Bifunctional Protein, Domain 2"/>
    <property type="match status" value="1"/>
</dbReference>
<dbReference type="HAMAP" id="MF_00127">
    <property type="entry name" value="His_tRNA_synth"/>
    <property type="match status" value="1"/>
</dbReference>
<dbReference type="InterPro" id="IPR006195">
    <property type="entry name" value="aa-tRNA-synth_II"/>
</dbReference>
<dbReference type="InterPro" id="IPR045864">
    <property type="entry name" value="aa-tRNA-synth_II/BPL/LPL"/>
</dbReference>
<dbReference type="InterPro" id="IPR004154">
    <property type="entry name" value="Anticodon-bd"/>
</dbReference>
<dbReference type="InterPro" id="IPR036621">
    <property type="entry name" value="Anticodon-bd_dom_sf"/>
</dbReference>
<dbReference type="InterPro" id="IPR015807">
    <property type="entry name" value="His-tRNA-ligase"/>
</dbReference>
<dbReference type="InterPro" id="IPR041715">
    <property type="entry name" value="HisRS-like_core"/>
</dbReference>
<dbReference type="InterPro" id="IPR004516">
    <property type="entry name" value="HisRS/HisZ"/>
</dbReference>
<dbReference type="InterPro" id="IPR033656">
    <property type="entry name" value="HisRS_anticodon"/>
</dbReference>
<dbReference type="NCBIfam" id="TIGR00442">
    <property type="entry name" value="hisS"/>
    <property type="match status" value="1"/>
</dbReference>
<dbReference type="PANTHER" id="PTHR43707:SF1">
    <property type="entry name" value="HISTIDINE--TRNA LIGASE, MITOCHONDRIAL-RELATED"/>
    <property type="match status" value="1"/>
</dbReference>
<dbReference type="PANTHER" id="PTHR43707">
    <property type="entry name" value="HISTIDYL-TRNA SYNTHETASE"/>
    <property type="match status" value="1"/>
</dbReference>
<dbReference type="Pfam" id="PF03129">
    <property type="entry name" value="HGTP_anticodon"/>
    <property type="match status" value="1"/>
</dbReference>
<dbReference type="Pfam" id="PF13393">
    <property type="entry name" value="tRNA-synt_His"/>
    <property type="match status" value="1"/>
</dbReference>
<dbReference type="PIRSF" id="PIRSF001549">
    <property type="entry name" value="His-tRNA_synth"/>
    <property type="match status" value="1"/>
</dbReference>
<dbReference type="SUPFAM" id="SSF52954">
    <property type="entry name" value="Class II aaRS ABD-related"/>
    <property type="match status" value="1"/>
</dbReference>
<dbReference type="SUPFAM" id="SSF55681">
    <property type="entry name" value="Class II aaRS and biotin synthetases"/>
    <property type="match status" value="1"/>
</dbReference>
<dbReference type="PROSITE" id="PS50862">
    <property type="entry name" value="AA_TRNA_LIGASE_II"/>
    <property type="match status" value="1"/>
</dbReference>
<comment type="catalytic activity">
    <reaction evidence="1">
        <text>tRNA(His) + L-histidine + ATP = L-histidyl-tRNA(His) + AMP + diphosphate + H(+)</text>
        <dbReference type="Rhea" id="RHEA:17313"/>
        <dbReference type="Rhea" id="RHEA-COMP:9665"/>
        <dbReference type="Rhea" id="RHEA-COMP:9689"/>
        <dbReference type="ChEBI" id="CHEBI:15378"/>
        <dbReference type="ChEBI" id="CHEBI:30616"/>
        <dbReference type="ChEBI" id="CHEBI:33019"/>
        <dbReference type="ChEBI" id="CHEBI:57595"/>
        <dbReference type="ChEBI" id="CHEBI:78442"/>
        <dbReference type="ChEBI" id="CHEBI:78527"/>
        <dbReference type="ChEBI" id="CHEBI:456215"/>
        <dbReference type="EC" id="6.1.1.21"/>
    </reaction>
</comment>
<comment type="subunit">
    <text evidence="1">Homodimer.</text>
</comment>
<comment type="subcellular location">
    <subcellularLocation>
        <location evidence="1">Cytoplasm</location>
    </subcellularLocation>
</comment>
<comment type="similarity">
    <text evidence="1">Belongs to the class-II aminoacyl-tRNA synthetase family.</text>
</comment>
<gene>
    <name evidence="1" type="primary">hisS</name>
    <name type="ordered locus">Ecok1_24480</name>
    <name type="ORF">APECO1_4010</name>
</gene>
<accession>A1AE52</accession>
<proteinExistence type="inferred from homology"/>
<sequence length="424" mass="47029">MAKNIQAIRGMNDYLPGETAIWQRIEGTLKNVLGSYGYSEIRLPIVEQTPLFKRAIGEVTDVVEKEMYTFEDRNGDSLTLRPEGTAGCVRAGIEHGLLYNQEQRLWYIGPMFRHERPQKGRYRQFHQLGCEVFGLQGPDIDAELIMLTARWWRALGISEHVTLELNSIGSLEARANYRDALVAFLEQHKEKLDEDCKRRMYTNPLRVLDSKNPEVQALLNDAPALGDYLDEESREHFAGLCKLLESAGIAYTVNQRLVRGLDYYNRTVFEWVTNSLGSQGTVCAGGRYDGLVEQLGGRATPAVGFAMGLERLVLLVQAVNPEFKADPVVDIYLVASGADTQSAAMALAERLRDELPGVKLMTNHGGGNFKKQFARADKWGARVAVVLGESEVANGTAVVKDLRSGEQTAVAQDSVAAHLRTLLG</sequence>
<organism>
    <name type="scientific">Escherichia coli O1:K1 / APEC</name>
    <dbReference type="NCBI Taxonomy" id="405955"/>
    <lineage>
        <taxon>Bacteria</taxon>
        <taxon>Pseudomonadati</taxon>
        <taxon>Pseudomonadota</taxon>
        <taxon>Gammaproteobacteria</taxon>
        <taxon>Enterobacterales</taxon>
        <taxon>Enterobacteriaceae</taxon>
        <taxon>Escherichia</taxon>
    </lineage>
</organism>
<feature type="chain" id="PRO_1000016355" description="Histidine--tRNA ligase">
    <location>
        <begin position="1"/>
        <end position="424"/>
    </location>
</feature>
<protein>
    <recommendedName>
        <fullName evidence="1">Histidine--tRNA ligase</fullName>
        <ecNumber evidence="1">6.1.1.21</ecNumber>
    </recommendedName>
    <alternativeName>
        <fullName evidence="1">Histidyl-tRNA synthetase</fullName>
        <shortName evidence="1">HisRS</shortName>
    </alternativeName>
</protein>